<gene>
    <name type="primary">ycjF</name>
    <name type="ordered locus">SF1328</name>
    <name type="ordered locus">S1411</name>
</gene>
<organism>
    <name type="scientific">Shigella flexneri</name>
    <dbReference type="NCBI Taxonomy" id="623"/>
    <lineage>
        <taxon>Bacteria</taxon>
        <taxon>Pseudomonadati</taxon>
        <taxon>Pseudomonadota</taxon>
        <taxon>Gammaproteobacteria</taxon>
        <taxon>Enterobacterales</taxon>
        <taxon>Enterobacteriaceae</taxon>
        <taxon>Shigella</taxon>
    </lineage>
</organism>
<evidence type="ECO:0000250" key="1"/>
<evidence type="ECO:0000255" key="2"/>
<evidence type="ECO:0000305" key="3"/>
<dbReference type="EMBL" id="AE005674">
    <property type="protein sequence ID" value="AAN42934.1"/>
    <property type="molecule type" value="Genomic_DNA"/>
</dbReference>
<dbReference type="EMBL" id="AE014073">
    <property type="protein sequence ID" value="AAP16818.1"/>
    <property type="molecule type" value="Genomic_DNA"/>
</dbReference>
<dbReference type="RefSeq" id="NP_707227.1">
    <property type="nucleotide sequence ID" value="NC_004337.2"/>
</dbReference>
<dbReference type="RefSeq" id="WP_000138745.1">
    <property type="nucleotide sequence ID" value="NZ_WPGW01000064.1"/>
</dbReference>
<dbReference type="SMR" id="Q83LB2"/>
<dbReference type="STRING" id="198214.SF1328"/>
<dbReference type="PaxDb" id="198214-SF1328"/>
<dbReference type="GeneID" id="1024281"/>
<dbReference type="KEGG" id="sfl:SF1328"/>
<dbReference type="KEGG" id="sfx:S1411"/>
<dbReference type="PATRIC" id="fig|198214.7.peg.1562"/>
<dbReference type="HOGENOM" id="CLU_057693_2_0_6"/>
<dbReference type="Proteomes" id="UP000001006">
    <property type="component" value="Chromosome"/>
</dbReference>
<dbReference type="Proteomes" id="UP000002673">
    <property type="component" value="Chromosome"/>
</dbReference>
<dbReference type="GO" id="GO:0005886">
    <property type="term" value="C:plasma membrane"/>
    <property type="evidence" value="ECO:0007669"/>
    <property type="project" value="UniProtKB-SubCell"/>
</dbReference>
<dbReference type="HAMAP" id="MF_01085">
    <property type="entry name" value="UPF0283"/>
    <property type="match status" value="1"/>
</dbReference>
<dbReference type="InterPro" id="IPR021147">
    <property type="entry name" value="DUF697"/>
</dbReference>
<dbReference type="InterPro" id="IPR006507">
    <property type="entry name" value="UPF0283"/>
</dbReference>
<dbReference type="NCBIfam" id="TIGR01620">
    <property type="entry name" value="hyp_HI0043"/>
    <property type="match status" value="1"/>
</dbReference>
<dbReference type="PANTHER" id="PTHR39342">
    <property type="entry name" value="UPF0283 MEMBRANE PROTEIN YCJF"/>
    <property type="match status" value="1"/>
</dbReference>
<dbReference type="PANTHER" id="PTHR39342:SF1">
    <property type="entry name" value="UPF0283 MEMBRANE PROTEIN YCJF"/>
    <property type="match status" value="1"/>
</dbReference>
<dbReference type="Pfam" id="PF05128">
    <property type="entry name" value="DUF697"/>
    <property type="match status" value="1"/>
</dbReference>
<comment type="subcellular location">
    <subcellularLocation>
        <location evidence="1">Cell inner membrane</location>
        <topology evidence="1">Multi-pass membrane protein</topology>
    </subcellularLocation>
</comment>
<comment type="similarity">
    <text evidence="3">Belongs to the UPF0283 family.</text>
</comment>
<reference key="1">
    <citation type="journal article" date="2002" name="Nucleic Acids Res.">
        <title>Genome sequence of Shigella flexneri 2a: insights into pathogenicity through comparison with genomes of Escherichia coli K12 and O157.</title>
        <authorList>
            <person name="Jin Q."/>
            <person name="Yuan Z."/>
            <person name="Xu J."/>
            <person name="Wang Y."/>
            <person name="Shen Y."/>
            <person name="Lu W."/>
            <person name="Wang J."/>
            <person name="Liu H."/>
            <person name="Yang J."/>
            <person name="Yang F."/>
            <person name="Zhang X."/>
            <person name="Zhang J."/>
            <person name="Yang G."/>
            <person name="Wu H."/>
            <person name="Qu D."/>
            <person name="Dong J."/>
            <person name="Sun L."/>
            <person name="Xue Y."/>
            <person name="Zhao A."/>
            <person name="Gao Y."/>
            <person name="Zhu J."/>
            <person name="Kan B."/>
            <person name="Ding K."/>
            <person name="Chen S."/>
            <person name="Cheng H."/>
            <person name="Yao Z."/>
            <person name="He B."/>
            <person name="Chen R."/>
            <person name="Ma D."/>
            <person name="Qiang B."/>
            <person name="Wen Y."/>
            <person name="Hou Y."/>
            <person name="Yu J."/>
        </authorList>
    </citation>
    <scope>NUCLEOTIDE SEQUENCE [LARGE SCALE GENOMIC DNA]</scope>
    <source>
        <strain>301 / Serotype 2a</strain>
    </source>
</reference>
<reference key="2">
    <citation type="journal article" date="2003" name="Infect. Immun.">
        <title>Complete genome sequence and comparative genomics of Shigella flexneri serotype 2a strain 2457T.</title>
        <authorList>
            <person name="Wei J."/>
            <person name="Goldberg M.B."/>
            <person name="Burland V."/>
            <person name="Venkatesan M.M."/>
            <person name="Deng W."/>
            <person name="Fournier G."/>
            <person name="Mayhew G.F."/>
            <person name="Plunkett G. III"/>
            <person name="Rose D.J."/>
            <person name="Darling A."/>
            <person name="Mau B."/>
            <person name="Perna N.T."/>
            <person name="Payne S.M."/>
            <person name="Runyen-Janecky L.J."/>
            <person name="Zhou S."/>
            <person name="Schwartz D.C."/>
            <person name="Blattner F.R."/>
        </authorList>
    </citation>
    <scope>NUCLEOTIDE SEQUENCE [LARGE SCALE GENOMIC DNA]</scope>
    <source>
        <strain>ATCC 700930 / 2457T / Serotype 2a</strain>
    </source>
</reference>
<feature type="chain" id="PRO_0000214187" description="UPF0283 membrane protein YcjF">
    <location>
        <begin position="1"/>
        <end position="353"/>
    </location>
</feature>
<feature type="topological domain" description="Periplasmic" evidence="2">
    <location>
        <begin position="1"/>
        <end position="69"/>
    </location>
</feature>
<feature type="transmembrane region" description="Helical" evidence="2">
    <location>
        <begin position="70"/>
        <end position="90"/>
    </location>
</feature>
<feature type="topological domain" description="Cytoplasmic" evidence="2">
    <location>
        <begin position="91"/>
        <end position="99"/>
    </location>
</feature>
<feature type="transmembrane region" description="Helical" evidence="2">
    <location>
        <begin position="100"/>
        <end position="120"/>
    </location>
</feature>
<feature type="topological domain" description="Periplasmic" evidence="2">
    <location>
        <begin position="121"/>
        <end position="212"/>
    </location>
</feature>
<feature type="transmembrane region" description="Helical" evidence="2">
    <location>
        <begin position="213"/>
        <end position="233"/>
    </location>
</feature>
<feature type="topological domain" description="Cytoplasmic" evidence="2">
    <location>
        <begin position="234"/>
        <end position="353"/>
    </location>
</feature>
<protein>
    <recommendedName>
        <fullName>UPF0283 membrane protein YcjF</fullName>
    </recommendedName>
</protein>
<name>YCJF_SHIFL</name>
<sequence>MTEPLKPRIDFDGPLEVEQNPKFRAQQTFDENQAQNFAPATLDEAQEEEGQVEAVMDAALRPKRSLWRKMVMGGLALFGASVVGQGIQWTMNAWQTQDWVALGGCAAGALIIGAGVGSVVTEWRRLWRLRQRAHERDEARDLLHSHGTGKGRAFCEKLAQQAGIDQSHPALQRWYASIHETQNDREVVSLYAHLVQPVLDAQARREISRSAAESTLMIAVSPLALVDMAFIAWRNLRLINRIATLYGIELGYYSRLRLFKLVLLNIAFAGASELVREVGMDWMSQDLAARLSTRAAQGIGAGLLTVRLGIKAMELCRPLPWIDDDKPRLGDFRRQLIGQVKETLQKGKTPSEK</sequence>
<accession>Q83LB2</accession>
<proteinExistence type="inferred from homology"/>
<keyword id="KW-0997">Cell inner membrane</keyword>
<keyword id="KW-1003">Cell membrane</keyword>
<keyword id="KW-0472">Membrane</keyword>
<keyword id="KW-1185">Reference proteome</keyword>
<keyword id="KW-0812">Transmembrane</keyword>
<keyword id="KW-1133">Transmembrane helix</keyword>